<sequence length="704" mass="77978">MTDTVFSSSSSRWMCPSDRPLQSNDKEQLQTGWSVHPSGQPDRQRKQEELTDEEKEIINRVIARAEKMEEMEQERIGRLVDRLENMRKNVAGDGVNRCILCGEQLGMLGSACVVCEDCKKNVCTKCGVETSNNRPHPVWLCKICIEQREVWKRSGAWFFKGFPKQVLPQPMPIKKNKPQQPVSEPVPAAPEPATPEPKHPARAPTRGDTEDRRGPGQKTGPDMTSAPGRGSYGPPVRRASEARMSSSGRDSDSWDQGHGMAAGDPSQSPAGLRRANSVQASRPAPASMQSPAPPQPGQPGPPGGSRPSPGPTGRFPDQRPEVAPSDPDYTGAAAQPREERTGGIGGYSAAGTREDRAGHPPGSYTQASAAAPQPVVASARQPPPPEEDEEEANSYDSDEATTLGALEFSLLYDQDNSSLHCTIIKAKGLKPMDSNGLADPYVKLHLLPGASKSNKLRTKTLRNTRNPIWNETLVYHGITDEDMQRKTLRISVCDEDKFGHNEFIGETRFSLKKLKPNQRKNFNICLERVIPMKRAGTTGSARGMALYEEEQVERIGDIEERGKILVSLMYSTQQGGLIVGIIRCVHLAAMDANGYSDPFVKLWLKPDMGKKAKHKTQIKKKTLNPEFNEEFFYDIKHSDLAKKSLDISVWDYDIGKSNDYIGGCQLGISAKGERLKHWYECLKNKDKKIERWHQLQNENHVSSD</sequence>
<proteinExistence type="evidence at protein level"/>
<organism>
    <name type="scientific">Bos taurus</name>
    <name type="common">Bovine</name>
    <dbReference type="NCBI Taxonomy" id="9913"/>
    <lineage>
        <taxon>Eukaryota</taxon>
        <taxon>Metazoa</taxon>
        <taxon>Chordata</taxon>
        <taxon>Craniata</taxon>
        <taxon>Vertebrata</taxon>
        <taxon>Euteleostomi</taxon>
        <taxon>Mammalia</taxon>
        <taxon>Eutheria</taxon>
        <taxon>Laurasiatheria</taxon>
        <taxon>Artiodactyla</taxon>
        <taxon>Ruminantia</taxon>
        <taxon>Pecora</taxon>
        <taxon>Bovidae</taxon>
        <taxon>Bovinae</taxon>
        <taxon>Bos</taxon>
    </lineage>
</organism>
<protein>
    <recommendedName>
        <fullName>Rabphilin-3A</fullName>
    </recommendedName>
    <alternativeName>
        <fullName>Exophilin-1</fullName>
    </alternativeName>
</protein>
<keyword id="KW-0106">Calcium</keyword>
<keyword id="KW-1003">Cell membrane</keyword>
<keyword id="KW-0966">Cell projection</keyword>
<keyword id="KW-0968">Cytoplasmic vesicle</keyword>
<keyword id="KW-0903">Direct protein sequencing</keyword>
<keyword id="KW-0446">Lipid-binding</keyword>
<keyword id="KW-0472">Membrane</keyword>
<keyword id="KW-0479">Metal-binding</keyword>
<keyword id="KW-0488">Methylation</keyword>
<keyword id="KW-0597">Phosphoprotein</keyword>
<keyword id="KW-0628">Postsynaptic cell membrane</keyword>
<keyword id="KW-0653">Protein transport</keyword>
<keyword id="KW-1185">Reference proteome</keyword>
<keyword id="KW-0677">Repeat</keyword>
<keyword id="KW-0770">Synapse</keyword>
<keyword id="KW-0813">Transport</keyword>
<keyword id="KW-0832">Ubl conjugation</keyword>
<keyword id="KW-0862">Zinc</keyword>
<keyword id="KW-0863">Zinc-finger</keyword>
<accession>Q06846</accession>
<comment type="function">
    <text evidence="3 9">Plays an essential role in docking and fusion steps of regulated exocytosis (By similarity). At the presynaptic level, RPH3A is recruited by RAB3A to the synaptic vesicle membrane in a GTP-dependent manner where it modulates synaptic vesicle trafficking and calcium-triggered neurotransmitter release (PubMed:9450942). In the post-synaptic compartment, forms a ternary complex with GRIN2A and DLG4 and regulates NMDA receptor stability. Also plays a role in the exocytosis of arginine vasopressin hormone (By similarity).</text>
</comment>
<comment type="cofactor">
    <cofactor evidence="5">
        <name>Ca(2+)</name>
        <dbReference type="ChEBI" id="CHEBI:29108"/>
    </cofactor>
</comment>
<comment type="subunit">
    <text evidence="2 3 4">Interacts with RAB3B, RAB3C, RAB3D, RAB8A, RAB27A and RAB27B (By similarity). Interacts with RAB3A; this interaction recruits RPH3A to synaptic vesicules (By similarity). Interacts (via C2B domain) with SNAP25 (By similarity). Interacts with deubiquitinating enzyme CAND1; this interaction results in the deubiquitination of RPH3A (By similarity). Interacts with GRIN2A and DLG4; this ternary complex regulates NMDA receptor composition at postsynaptic membranes (By similarity). Interacts with SNCA (By similarity).</text>
</comment>
<comment type="subcellular location">
    <subcellularLocation>
        <location evidence="3">Cytoplasmic vesicle</location>
        <location evidence="3">Secretory vesicle</location>
        <location evidence="3">Synaptic vesicle membrane</location>
    </subcellularLocation>
    <subcellularLocation>
        <location evidence="3">Cell projection</location>
        <location evidence="3">Dendritic spine</location>
    </subcellularLocation>
    <subcellularLocation>
        <location evidence="3">Postsynaptic cell membrane</location>
    </subcellularLocation>
    <subcellularLocation>
        <location evidence="3">Membrane</location>
        <topology evidence="3">Peripheral membrane protein</topology>
    </subcellularLocation>
</comment>
<comment type="tissue specificity">
    <text>Specifically expressed in brain.</text>
</comment>
<comment type="domain">
    <text evidence="1">Binds calcium via the C2 domains. The calcium-bound C2 domains mediate interactions with phospholipid bilayers (By similarity).</text>
</comment>
<comment type="PTM">
    <text evidence="3">Ubiquitinated. Deubiquitinated by CAND1 to prevent its degradation.</text>
</comment>
<gene>
    <name type="primary">RPH3A</name>
</gene>
<evidence type="ECO:0000250" key="1"/>
<evidence type="ECO:0000250" key="2">
    <source>
        <dbReference type="UniProtKB" id="P47708"/>
    </source>
</evidence>
<evidence type="ECO:0000250" key="3">
    <source>
        <dbReference type="UniProtKB" id="P47709"/>
    </source>
</evidence>
<evidence type="ECO:0000250" key="4">
    <source>
        <dbReference type="UniProtKB" id="Q9Y2J0"/>
    </source>
</evidence>
<evidence type="ECO:0000255" key="5">
    <source>
        <dbReference type="PROSITE-ProRule" id="PRU00041"/>
    </source>
</evidence>
<evidence type="ECO:0000255" key="6">
    <source>
        <dbReference type="PROSITE-ProRule" id="PRU00091"/>
    </source>
</evidence>
<evidence type="ECO:0000255" key="7">
    <source>
        <dbReference type="PROSITE-ProRule" id="PRU00234"/>
    </source>
</evidence>
<evidence type="ECO:0000256" key="8">
    <source>
        <dbReference type="SAM" id="MobiDB-lite"/>
    </source>
</evidence>
<evidence type="ECO:0000269" key="9">
    <source>
    </source>
</evidence>
<dbReference type="EMBL" id="D13613">
    <property type="protein sequence ID" value="BAA02780.1"/>
    <property type="molecule type" value="mRNA"/>
</dbReference>
<dbReference type="PIR" id="A48097">
    <property type="entry name" value="A48097"/>
</dbReference>
<dbReference type="RefSeq" id="NP_776879.1">
    <property type="nucleotide sequence ID" value="NM_174454.3"/>
</dbReference>
<dbReference type="SMR" id="Q06846"/>
<dbReference type="FunCoup" id="Q06846">
    <property type="interactions" value="898"/>
</dbReference>
<dbReference type="STRING" id="9913.ENSBTAP00000005564"/>
<dbReference type="PaxDb" id="9913-ENSBTAP00000005564"/>
<dbReference type="GeneID" id="282044"/>
<dbReference type="KEGG" id="bta:282044"/>
<dbReference type="CTD" id="22895"/>
<dbReference type="eggNOG" id="KOG1013">
    <property type="taxonomic scope" value="Eukaryota"/>
</dbReference>
<dbReference type="InParanoid" id="Q06846"/>
<dbReference type="OrthoDB" id="270970at2759"/>
<dbReference type="Proteomes" id="UP000009136">
    <property type="component" value="Unplaced"/>
</dbReference>
<dbReference type="GO" id="GO:0043197">
    <property type="term" value="C:dendritic spine"/>
    <property type="evidence" value="ECO:0007669"/>
    <property type="project" value="UniProtKB-SubCell"/>
</dbReference>
<dbReference type="GO" id="GO:0098850">
    <property type="term" value="C:extrinsic component of synaptic vesicle membrane"/>
    <property type="evidence" value="ECO:0000318"/>
    <property type="project" value="GO_Central"/>
</dbReference>
<dbReference type="GO" id="GO:0043005">
    <property type="term" value="C:neuron projection"/>
    <property type="evidence" value="ECO:0000318"/>
    <property type="project" value="GO_Central"/>
</dbReference>
<dbReference type="GO" id="GO:0045211">
    <property type="term" value="C:postsynaptic membrane"/>
    <property type="evidence" value="ECO:0000318"/>
    <property type="project" value="GO_Central"/>
</dbReference>
<dbReference type="GO" id="GO:0045202">
    <property type="term" value="C:synapse"/>
    <property type="evidence" value="ECO:0000318"/>
    <property type="project" value="GO_Central"/>
</dbReference>
<dbReference type="GO" id="GO:0005509">
    <property type="term" value="F:calcium ion binding"/>
    <property type="evidence" value="ECO:0000250"/>
    <property type="project" value="UniProtKB"/>
</dbReference>
<dbReference type="GO" id="GO:0005544">
    <property type="term" value="F:calcium-dependent phospholipid binding"/>
    <property type="evidence" value="ECO:0000250"/>
    <property type="project" value="UniProtKB"/>
</dbReference>
<dbReference type="GO" id="GO:0031267">
    <property type="term" value="F:small GTPase binding"/>
    <property type="evidence" value="ECO:0007669"/>
    <property type="project" value="InterPro"/>
</dbReference>
<dbReference type="GO" id="GO:0008270">
    <property type="term" value="F:zinc ion binding"/>
    <property type="evidence" value="ECO:0007669"/>
    <property type="project" value="UniProtKB-KW"/>
</dbReference>
<dbReference type="GO" id="GO:0099502">
    <property type="term" value="P:calcium-dependent activation of synaptic vesicle fusion"/>
    <property type="evidence" value="ECO:0000318"/>
    <property type="project" value="GO_Central"/>
</dbReference>
<dbReference type="GO" id="GO:0006886">
    <property type="term" value="P:intracellular protein transport"/>
    <property type="evidence" value="ECO:0007669"/>
    <property type="project" value="InterPro"/>
</dbReference>
<dbReference type="GO" id="GO:0045956">
    <property type="term" value="P:positive regulation of calcium ion-dependent exocytosis"/>
    <property type="evidence" value="ECO:0000318"/>
    <property type="project" value="GO_Central"/>
</dbReference>
<dbReference type="CDD" id="cd04035">
    <property type="entry name" value="C2A_Rabphilin_Doc2"/>
    <property type="match status" value="1"/>
</dbReference>
<dbReference type="CDD" id="cd08384">
    <property type="entry name" value="C2B_Rabphilin_Doc2"/>
    <property type="match status" value="1"/>
</dbReference>
<dbReference type="CDD" id="cd15762">
    <property type="entry name" value="FYVE_RP3A"/>
    <property type="match status" value="1"/>
</dbReference>
<dbReference type="FunFam" id="2.60.40.150:FF:000032">
    <property type="entry name" value="Double c2-like domain-containing"/>
    <property type="match status" value="1"/>
</dbReference>
<dbReference type="FunFam" id="2.60.40.150:FF:000023">
    <property type="entry name" value="Double C2-like domain-containing protein"/>
    <property type="match status" value="1"/>
</dbReference>
<dbReference type="FunFam" id="3.30.40.10:FF:000182">
    <property type="entry name" value="rabphilin-3A isoform X1"/>
    <property type="match status" value="1"/>
</dbReference>
<dbReference type="Gene3D" id="2.60.40.150">
    <property type="entry name" value="C2 domain"/>
    <property type="match status" value="2"/>
</dbReference>
<dbReference type="Gene3D" id="3.30.40.10">
    <property type="entry name" value="Zinc/RING finger domain, C3HC4 (zinc finger)"/>
    <property type="match status" value="1"/>
</dbReference>
<dbReference type="InterPro" id="IPR000008">
    <property type="entry name" value="C2_dom"/>
</dbReference>
<dbReference type="InterPro" id="IPR035892">
    <property type="entry name" value="C2_domain_sf"/>
</dbReference>
<dbReference type="InterPro" id="IPR041282">
    <property type="entry name" value="FYVE_2"/>
</dbReference>
<dbReference type="InterPro" id="IPR028698">
    <property type="entry name" value="FYVE_RPH3A"/>
</dbReference>
<dbReference type="InterPro" id="IPR010911">
    <property type="entry name" value="Rab_BD"/>
</dbReference>
<dbReference type="InterPro" id="IPR043566">
    <property type="entry name" value="Rabphilin/DOC2/Noc2"/>
</dbReference>
<dbReference type="InterPro" id="IPR047022">
    <property type="entry name" value="Rabphilin_Doc2_C2A"/>
</dbReference>
<dbReference type="InterPro" id="IPR001565">
    <property type="entry name" value="Synaptotagmin"/>
</dbReference>
<dbReference type="InterPro" id="IPR017455">
    <property type="entry name" value="Znf_FYVE-rel"/>
</dbReference>
<dbReference type="InterPro" id="IPR011011">
    <property type="entry name" value="Znf_FYVE_PHD"/>
</dbReference>
<dbReference type="InterPro" id="IPR013083">
    <property type="entry name" value="Znf_RING/FYVE/PHD"/>
</dbReference>
<dbReference type="PANTHER" id="PTHR45729">
    <property type="entry name" value="RABPHILIN, ISOFORM A"/>
    <property type="match status" value="1"/>
</dbReference>
<dbReference type="PANTHER" id="PTHR45729:SF3">
    <property type="entry name" value="RABPHILIN-3A"/>
    <property type="match status" value="1"/>
</dbReference>
<dbReference type="Pfam" id="PF00168">
    <property type="entry name" value="C2"/>
    <property type="match status" value="2"/>
</dbReference>
<dbReference type="Pfam" id="PF02318">
    <property type="entry name" value="FYVE_2"/>
    <property type="match status" value="1"/>
</dbReference>
<dbReference type="PRINTS" id="PR00360">
    <property type="entry name" value="C2DOMAIN"/>
</dbReference>
<dbReference type="PRINTS" id="PR00399">
    <property type="entry name" value="SYNAPTOTAGMN"/>
</dbReference>
<dbReference type="SMART" id="SM00239">
    <property type="entry name" value="C2"/>
    <property type="match status" value="2"/>
</dbReference>
<dbReference type="SUPFAM" id="SSF49562">
    <property type="entry name" value="C2 domain (Calcium/lipid-binding domain, CaLB)"/>
    <property type="match status" value="2"/>
</dbReference>
<dbReference type="SUPFAM" id="SSF57903">
    <property type="entry name" value="FYVE/PHD zinc finger"/>
    <property type="match status" value="1"/>
</dbReference>
<dbReference type="PROSITE" id="PS50004">
    <property type="entry name" value="C2"/>
    <property type="match status" value="2"/>
</dbReference>
<dbReference type="PROSITE" id="PS50916">
    <property type="entry name" value="RABBD"/>
    <property type="match status" value="1"/>
</dbReference>
<dbReference type="PROSITE" id="PS50178">
    <property type="entry name" value="ZF_FYVE"/>
    <property type="match status" value="1"/>
</dbReference>
<name>RP3A_BOVIN</name>
<feature type="chain" id="PRO_0000190226" description="Rabphilin-3A">
    <location>
        <begin position="1"/>
        <end position="704"/>
    </location>
</feature>
<feature type="domain" description="RabBD" evidence="7">
    <location>
        <begin position="44"/>
        <end position="161"/>
    </location>
</feature>
<feature type="domain" description="C2 1" evidence="5">
    <location>
        <begin position="402"/>
        <end position="524"/>
    </location>
</feature>
<feature type="domain" description="C2 2" evidence="5">
    <location>
        <begin position="560"/>
        <end position="693"/>
    </location>
</feature>
<feature type="zinc finger region" description="FYVE-type" evidence="6">
    <location>
        <begin position="92"/>
        <end position="149"/>
    </location>
</feature>
<feature type="region of interest" description="Disordered" evidence="8">
    <location>
        <begin position="1"/>
        <end position="52"/>
    </location>
</feature>
<feature type="region of interest" description="Disordered" evidence="8">
    <location>
        <begin position="167"/>
        <end position="398"/>
    </location>
</feature>
<feature type="compositionally biased region" description="Polar residues" evidence="8">
    <location>
        <begin position="1"/>
        <end position="12"/>
    </location>
</feature>
<feature type="compositionally biased region" description="Basic and acidic residues" evidence="8">
    <location>
        <begin position="205"/>
        <end position="214"/>
    </location>
</feature>
<feature type="compositionally biased region" description="Low complexity" evidence="8">
    <location>
        <begin position="279"/>
        <end position="290"/>
    </location>
</feature>
<feature type="compositionally biased region" description="Pro residues" evidence="8">
    <location>
        <begin position="291"/>
        <end position="310"/>
    </location>
</feature>
<feature type="compositionally biased region" description="Low complexity" evidence="8">
    <location>
        <begin position="366"/>
        <end position="380"/>
    </location>
</feature>
<feature type="compositionally biased region" description="Acidic residues" evidence="8">
    <location>
        <begin position="385"/>
        <end position="398"/>
    </location>
</feature>
<feature type="binding site" evidence="6">
    <location>
        <position position="98"/>
    </location>
    <ligand>
        <name>Zn(2+)</name>
        <dbReference type="ChEBI" id="CHEBI:29105"/>
        <label>1</label>
    </ligand>
</feature>
<feature type="binding site" evidence="6">
    <location>
        <position position="101"/>
    </location>
    <ligand>
        <name>Zn(2+)</name>
        <dbReference type="ChEBI" id="CHEBI:29105"/>
        <label>1</label>
    </ligand>
</feature>
<feature type="binding site" evidence="6">
    <location>
        <position position="115"/>
    </location>
    <ligand>
        <name>Zn(2+)</name>
        <dbReference type="ChEBI" id="CHEBI:29105"/>
        <label>2</label>
    </ligand>
</feature>
<feature type="binding site" evidence="6">
    <location>
        <position position="118"/>
    </location>
    <ligand>
        <name>Zn(2+)</name>
        <dbReference type="ChEBI" id="CHEBI:29105"/>
        <label>2</label>
    </ligand>
</feature>
<feature type="binding site" evidence="6">
    <location>
        <position position="123"/>
    </location>
    <ligand>
        <name>Zn(2+)</name>
        <dbReference type="ChEBI" id="CHEBI:29105"/>
        <label>1</label>
    </ligand>
</feature>
<feature type="binding site" evidence="6">
    <location>
        <position position="126"/>
    </location>
    <ligand>
        <name>Zn(2+)</name>
        <dbReference type="ChEBI" id="CHEBI:29105"/>
        <label>1</label>
    </ligand>
</feature>
<feature type="binding site" evidence="6">
    <location>
        <position position="141"/>
    </location>
    <ligand>
        <name>Zn(2+)</name>
        <dbReference type="ChEBI" id="CHEBI:29105"/>
        <label>2</label>
    </ligand>
</feature>
<feature type="binding site" evidence="6">
    <location>
        <position position="144"/>
    </location>
    <ligand>
        <name>Zn(2+)</name>
        <dbReference type="ChEBI" id="CHEBI:29105"/>
        <label>2</label>
    </ligand>
</feature>
<feature type="binding site" evidence="2">
    <location>
        <position position="432"/>
    </location>
    <ligand>
        <name>Ca(2+)</name>
        <dbReference type="ChEBI" id="CHEBI:29108"/>
        <label>1</label>
    </ligand>
</feature>
<feature type="binding site" evidence="2">
    <location>
        <position position="433"/>
    </location>
    <ligand>
        <name>Ca(2+)</name>
        <dbReference type="ChEBI" id="CHEBI:29108"/>
        <label>1</label>
    </ligand>
</feature>
<feature type="binding site" evidence="2">
    <location>
        <position position="433"/>
    </location>
    <ligand>
        <name>Ca(2+)</name>
        <dbReference type="ChEBI" id="CHEBI:29108"/>
        <label>2</label>
    </ligand>
</feature>
<feature type="binding site" evidence="2">
    <location>
        <position position="439"/>
    </location>
    <ligand>
        <name>Ca(2+)</name>
        <dbReference type="ChEBI" id="CHEBI:29108"/>
        <label>2</label>
    </ligand>
</feature>
<feature type="binding site" evidence="2">
    <location>
        <position position="494"/>
    </location>
    <ligand>
        <name>Ca(2+)</name>
        <dbReference type="ChEBI" id="CHEBI:29108"/>
        <label>1</label>
    </ligand>
</feature>
<feature type="binding site" evidence="2">
    <location>
        <position position="494"/>
    </location>
    <ligand>
        <name>Ca(2+)</name>
        <dbReference type="ChEBI" id="CHEBI:29108"/>
        <label>2</label>
    </ligand>
</feature>
<feature type="binding site" evidence="2">
    <location>
        <position position="495"/>
    </location>
    <ligand>
        <name>Ca(2+)</name>
        <dbReference type="ChEBI" id="CHEBI:29108"/>
        <label>2</label>
    </ligand>
</feature>
<feature type="binding site" evidence="2">
    <location>
        <position position="496"/>
    </location>
    <ligand>
        <name>Ca(2+)</name>
        <dbReference type="ChEBI" id="CHEBI:29108"/>
        <label>1</label>
    </ligand>
</feature>
<feature type="binding site" evidence="2">
    <location>
        <position position="496"/>
    </location>
    <ligand>
        <name>Ca(2+)</name>
        <dbReference type="ChEBI" id="CHEBI:29108"/>
        <label>2</label>
    </ligand>
</feature>
<feature type="binding site" evidence="2">
    <location>
        <position position="502"/>
    </location>
    <ligand>
        <name>Ca(2+)</name>
        <dbReference type="ChEBI" id="CHEBI:29108"/>
        <label>1</label>
    </ligand>
</feature>
<feature type="binding site" evidence="3">
    <location>
        <position position="549"/>
    </location>
    <ligand>
        <name>Ca(2+)</name>
        <dbReference type="ChEBI" id="CHEBI:29108"/>
        <label>3</label>
    </ligand>
</feature>
<feature type="binding site" evidence="3">
    <location>
        <position position="591"/>
    </location>
    <ligand>
        <name>Ca(2+)</name>
        <dbReference type="ChEBI" id="CHEBI:29108"/>
        <label>3</label>
    </ligand>
</feature>
<feature type="binding site" evidence="3">
    <location>
        <position position="591"/>
    </location>
    <ligand>
        <name>Ca(2+)</name>
        <dbReference type="ChEBI" id="CHEBI:29108"/>
        <label>4</label>
    </ligand>
</feature>
<feature type="binding site" evidence="3">
    <location>
        <position position="597"/>
    </location>
    <ligand>
        <name>Ca(2+)</name>
        <dbReference type="ChEBI" id="CHEBI:29108"/>
        <label>3</label>
    </ligand>
</feature>
<feature type="binding site" evidence="3">
    <location>
        <position position="651"/>
    </location>
    <ligand>
        <name>Ca(2+)</name>
        <dbReference type="ChEBI" id="CHEBI:29108"/>
        <label>3</label>
    </ligand>
</feature>
<feature type="binding site" evidence="3">
    <location>
        <position position="651"/>
    </location>
    <ligand>
        <name>Ca(2+)</name>
        <dbReference type="ChEBI" id="CHEBI:29108"/>
        <label>4</label>
    </ligand>
</feature>
<feature type="binding site" evidence="3">
    <location>
        <position position="652"/>
    </location>
    <ligand>
        <name>Ca(2+)</name>
        <dbReference type="ChEBI" id="CHEBI:29108"/>
        <label>3</label>
    </ligand>
</feature>
<feature type="binding site" evidence="3">
    <location>
        <position position="653"/>
    </location>
    <ligand>
        <name>Ca(2+)</name>
        <dbReference type="ChEBI" id="CHEBI:29108"/>
        <label>3</label>
    </ligand>
</feature>
<feature type="binding site" evidence="3">
    <location>
        <position position="653"/>
    </location>
    <ligand>
        <name>Ca(2+)</name>
        <dbReference type="ChEBI" id="CHEBI:29108"/>
        <label>4</label>
    </ligand>
</feature>
<feature type="binding site" evidence="3">
    <location>
        <position position="659"/>
    </location>
    <ligand>
        <name>Ca(2+)</name>
        <dbReference type="ChEBI" id="CHEBI:29108"/>
        <label>4</label>
    </ligand>
</feature>
<feature type="modified residue" description="Omega-N-methylarginine" evidence="2">
    <location>
        <position position="229"/>
    </location>
</feature>
<feature type="modified residue" description="Phosphoserine" evidence="2">
    <location>
        <position position="277"/>
    </location>
</feature>
<feature type="modified residue" description="Phosphoserine" evidence="3">
    <location>
        <position position="702"/>
    </location>
</feature>
<feature type="modified residue" description="Phosphoserine" evidence="3">
    <location>
        <position position="703"/>
    </location>
</feature>
<reference key="1">
    <citation type="journal article" date="1993" name="Mol. Cell. Biol.">
        <title>Rabphilin-3A, a putative target protein for smg p25A/rab3A p25 small GTP-binding protein related to synaptotagmin.</title>
        <authorList>
            <person name="Shirataki H."/>
            <person name="Kaibuchi K."/>
            <person name="Sakoda T."/>
            <person name="Kishida S."/>
            <person name="Yamaguchi T."/>
            <person name="Wada K."/>
            <person name="Miyazaki M."/>
            <person name="Takai Y."/>
        </authorList>
    </citation>
    <scope>NUCLEOTIDE SEQUENCE [MRNA]</scope>
    <scope>PARTIAL PROTEIN SEQUENCE</scope>
    <source>
        <tissue>Brain</tissue>
    </source>
</reference>
<reference key="2">
    <citation type="journal article" date="1993" name="J. Biol. Chem.">
        <title>Two functionally different domains of rabphilin-3A, Rab3A p25/smg p25A-binding and phospholipid- and Ca(2+)-binding domains.</title>
        <authorList>
            <person name="Yamaguchi T."/>
            <person name="Shirataki H."/>
            <person name="Kishida S."/>
            <person name="Miyazaki M."/>
            <person name="Nishikawa J."/>
            <person name="Wada K."/>
            <person name="Numata S."/>
            <person name="Kaibuchi K."/>
            <person name="Takai Y."/>
        </authorList>
    </citation>
    <scope>DOMAINS</scope>
</reference>
<reference key="3">
    <citation type="journal article" date="1998" name="J. Gen. Physiol.">
        <title>Rabphilin-3A: a multifunctional regulator of synaptic vesicle traffic.</title>
        <authorList>
            <person name="Burns M.E."/>
            <person name="Sasaki T."/>
            <person name="Takai Y."/>
            <person name="Augustine G.J."/>
        </authorList>
    </citation>
    <scope>FUNCTION</scope>
</reference>